<comment type="function">
    <text evidence="1">Probable methyltransferase.</text>
</comment>
<comment type="subcellular location">
    <subcellularLocation>
        <location evidence="2">Cytoplasm</location>
    </subcellularLocation>
    <subcellularLocation>
        <location evidence="2">Nucleus</location>
    </subcellularLocation>
</comment>
<comment type="similarity">
    <text evidence="3">Belongs to the methyltransferase superfamily.</text>
</comment>
<evidence type="ECO:0000250" key="1"/>
<evidence type="ECO:0000269" key="2">
    <source>
    </source>
</evidence>
<evidence type="ECO:0000305" key="3"/>
<protein>
    <recommendedName>
        <fullName>Uncharacterized methyltransferase-like C25B8.10</fullName>
        <ecNumber>2.1.1.-</ecNumber>
    </recommendedName>
</protein>
<organism>
    <name type="scientific">Schizosaccharomyces pombe (strain 972 / ATCC 24843)</name>
    <name type="common">Fission yeast</name>
    <dbReference type="NCBI Taxonomy" id="284812"/>
    <lineage>
        <taxon>Eukaryota</taxon>
        <taxon>Fungi</taxon>
        <taxon>Dikarya</taxon>
        <taxon>Ascomycota</taxon>
        <taxon>Taphrinomycotina</taxon>
        <taxon>Schizosaccharomycetes</taxon>
        <taxon>Schizosaccharomycetales</taxon>
        <taxon>Schizosaccharomycetaceae</taxon>
        <taxon>Schizosaccharomyces</taxon>
    </lineage>
</organism>
<name>YL8A_SCHPO</name>
<sequence length="256" mass="29377">MAEQIDLKTFKTDVADYEAARPEYPIGITDWITDEFLIDETSIILELGAGTGKFTPRIIASHPKEIIAVDVYPEMLDVLRKKFPNVDCRAGSAMAIPLEDESVDLVLCAQCFHWFANEEAMKEIYRVLKPNGKLGLVWNTRDDTVPWIEKVSKILGRYRKDAPSFVSWKWAELFPGHGFGKLRYCAFPFSRCLTVEELHTLMNSFSFIYKLPEEEKEKVHAELDEIAKTIPRVQNTDQIKLCYQTMAFSSEKEPAK</sequence>
<proteinExistence type="inferred from homology"/>
<reference key="1">
    <citation type="journal article" date="2002" name="Nature">
        <title>The genome sequence of Schizosaccharomyces pombe.</title>
        <authorList>
            <person name="Wood V."/>
            <person name="Gwilliam R."/>
            <person name="Rajandream M.A."/>
            <person name="Lyne M.H."/>
            <person name="Lyne R."/>
            <person name="Stewart A."/>
            <person name="Sgouros J.G."/>
            <person name="Peat N."/>
            <person name="Hayles J."/>
            <person name="Baker S.G."/>
            <person name="Basham D."/>
            <person name="Bowman S."/>
            <person name="Brooks K."/>
            <person name="Brown D."/>
            <person name="Brown S."/>
            <person name="Chillingworth T."/>
            <person name="Churcher C.M."/>
            <person name="Collins M."/>
            <person name="Connor R."/>
            <person name="Cronin A."/>
            <person name="Davis P."/>
            <person name="Feltwell T."/>
            <person name="Fraser A."/>
            <person name="Gentles S."/>
            <person name="Goble A."/>
            <person name="Hamlin N."/>
            <person name="Harris D.E."/>
            <person name="Hidalgo J."/>
            <person name="Hodgson G."/>
            <person name="Holroyd S."/>
            <person name="Hornsby T."/>
            <person name="Howarth S."/>
            <person name="Huckle E.J."/>
            <person name="Hunt S."/>
            <person name="Jagels K."/>
            <person name="James K.D."/>
            <person name="Jones L."/>
            <person name="Jones M."/>
            <person name="Leather S."/>
            <person name="McDonald S."/>
            <person name="McLean J."/>
            <person name="Mooney P."/>
            <person name="Moule S."/>
            <person name="Mungall K.L."/>
            <person name="Murphy L.D."/>
            <person name="Niblett D."/>
            <person name="Odell C."/>
            <person name="Oliver K."/>
            <person name="O'Neil S."/>
            <person name="Pearson D."/>
            <person name="Quail M.A."/>
            <person name="Rabbinowitsch E."/>
            <person name="Rutherford K.M."/>
            <person name="Rutter S."/>
            <person name="Saunders D."/>
            <person name="Seeger K."/>
            <person name="Sharp S."/>
            <person name="Skelton J."/>
            <person name="Simmonds M.N."/>
            <person name="Squares R."/>
            <person name="Squares S."/>
            <person name="Stevens K."/>
            <person name="Taylor K."/>
            <person name="Taylor R.G."/>
            <person name="Tivey A."/>
            <person name="Walsh S.V."/>
            <person name="Warren T."/>
            <person name="Whitehead S."/>
            <person name="Woodward J.R."/>
            <person name="Volckaert G."/>
            <person name="Aert R."/>
            <person name="Robben J."/>
            <person name="Grymonprez B."/>
            <person name="Weltjens I."/>
            <person name="Vanstreels E."/>
            <person name="Rieger M."/>
            <person name="Schaefer M."/>
            <person name="Mueller-Auer S."/>
            <person name="Gabel C."/>
            <person name="Fuchs M."/>
            <person name="Duesterhoeft A."/>
            <person name="Fritzc C."/>
            <person name="Holzer E."/>
            <person name="Moestl D."/>
            <person name="Hilbert H."/>
            <person name="Borzym K."/>
            <person name="Langer I."/>
            <person name="Beck A."/>
            <person name="Lehrach H."/>
            <person name="Reinhardt R."/>
            <person name="Pohl T.M."/>
            <person name="Eger P."/>
            <person name="Zimmermann W."/>
            <person name="Wedler H."/>
            <person name="Wambutt R."/>
            <person name="Purnelle B."/>
            <person name="Goffeau A."/>
            <person name="Cadieu E."/>
            <person name="Dreano S."/>
            <person name="Gloux S."/>
            <person name="Lelaure V."/>
            <person name="Mottier S."/>
            <person name="Galibert F."/>
            <person name="Aves S.J."/>
            <person name="Xiang Z."/>
            <person name="Hunt C."/>
            <person name="Moore K."/>
            <person name="Hurst S.M."/>
            <person name="Lucas M."/>
            <person name="Rochet M."/>
            <person name="Gaillardin C."/>
            <person name="Tallada V.A."/>
            <person name="Garzon A."/>
            <person name="Thode G."/>
            <person name="Daga R.R."/>
            <person name="Cruzado L."/>
            <person name="Jimenez J."/>
            <person name="Sanchez M."/>
            <person name="del Rey F."/>
            <person name="Benito J."/>
            <person name="Dominguez A."/>
            <person name="Revuelta J.L."/>
            <person name="Moreno S."/>
            <person name="Armstrong J."/>
            <person name="Forsburg S.L."/>
            <person name="Cerutti L."/>
            <person name="Lowe T."/>
            <person name="McCombie W.R."/>
            <person name="Paulsen I."/>
            <person name="Potashkin J."/>
            <person name="Shpakovski G.V."/>
            <person name="Ussery D."/>
            <person name="Barrell B.G."/>
            <person name="Nurse P."/>
        </authorList>
    </citation>
    <scope>NUCLEOTIDE SEQUENCE [LARGE SCALE GENOMIC DNA]</scope>
    <source>
        <strain>972 / ATCC 24843</strain>
    </source>
</reference>
<reference key="2">
    <citation type="journal article" date="2006" name="Nat. Biotechnol.">
        <title>ORFeome cloning and global analysis of protein localization in the fission yeast Schizosaccharomyces pombe.</title>
        <authorList>
            <person name="Matsuyama A."/>
            <person name="Arai R."/>
            <person name="Yashiroda Y."/>
            <person name="Shirai A."/>
            <person name="Kamata A."/>
            <person name="Sekido S."/>
            <person name="Kobayashi Y."/>
            <person name="Hashimoto A."/>
            <person name="Hamamoto M."/>
            <person name="Hiraoka Y."/>
            <person name="Horinouchi S."/>
            <person name="Yoshida M."/>
        </authorList>
    </citation>
    <scope>SUBCELLULAR LOCATION [LARGE SCALE ANALYSIS]</scope>
</reference>
<gene>
    <name type="ORF">SPAC25B8.10</name>
</gene>
<feature type="chain" id="PRO_0000339153" description="Uncharacterized methyltransferase-like C25B8.10">
    <location>
        <begin position="1"/>
        <end position="256"/>
    </location>
</feature>
<dbReference type="EC" id="2.1.1.-"/>
<dbReference type="EMBL" id="CU329670">
    <property type="protein sequence ID" value="CAB61776.1"/>
    <property type="molecule type" value="Genomic_DNA"/>
</dbReference>
<dbReference type="PIR" id="T50197">
    <property type="entry name" value="T50197"/>
</dbReference>
<dbReference type="RefSeq" id="NP_594470.1">
    <property type="nucleotide sequence ID" value="NM_001019899.2"/>
</dbReference>
<dbReference type="SMR" id="Q9UTA8"/>
<dbReference type="FunCoup" id="Q9UTA8">
    <property type="interactions" value="209"/>
</dbReference>
<dbReference type="iPTMnet" id="Q9UTA8"/>
<dbReference type="PaxDb" id="4896-SPAC25B8.10.1"/>
<dbReference type="DNASU" id="2541626"/>
<dbReference type="EnsemblFungi" id="SPAC25B8.10.1">
    <property type="protein sequence ID" value="SPAC25B8.10.1:pep"/>
    <property type="gene ID" value="SPAC25B8.10"/>
</dbReference>
<dbReference type="KEGG" id="spo:2541626"/>
<dbReference type="PomBase" id="SPAC25B8.10"/>
<dbReference type="VEuPathDB" id="FungiDB:SPAC25B8.10"/>
<dbReference type="eggNOG" id="KOG3010">
    <property type="taxonomic scope" value="Eukaryota"/>
</dbReference>
<dbReference type="HOGENOM" id="CLU_049344_3_0_1"/>
<dbReference type="InParanoid" id="Q9UTA8"/>
<dbReference type="OMA" id="WRATFDT"/>
<dbReference type="PhylomeDB" id="Q9UTA8"/>
<dbReference type="PRO" id="PR:Q9UTA8"/>
<dbReference type="Proteomes" id="UP000002485">
    <property type="component" value="Chromosome I"/>
</dbReference>
<dbReference type="GO" id="GO:0005829">
    <property type="term" value="C:cytosol"/>
    <property type="evidence" value="ECO:0007005"/>
    <property type="project" value="PomBase"/>
</dbReference>
<dbReference type="GO" id="GO:0005634">
    <property type="term" value="C:nucleus"/>
    <property type="evidence" value="ECO:0007005"/>
    <property type="project" value="PomBase"/>
</dbReference>
<dbReference type="GO" id="GO:0008168">
    <property type="term" value="F:methyltransferase activity"/>
    <property type="evidence" value="ECO:0000318"/>
    <property type="project" value="GO_Central"/>
</dbReference>
<dbReference type="GO" id="GO:0046547">
    <property type="term" value="F:trans-aconitate 3-methyltransferase activity"/>
    <property type="evidence" value="ECO:0000266"/>
    <property type="project" value="PomBase"/>
</dbReference>
<dbReference type="GO" id="GO:1990748">
    <property type="term" value="P:cellular detoxification"/>
    <property type="evidence" value="ECO:0000305"/>
    <property type="project" value="PomBase"/>
</dbReference>
<dbReference type="GO" id="GO:0032259">
    <property type="term" value="P:methylation"/>
    <property type="evidence" value="ECO:0007669"/>
    <property type="project" value="UniProtKB-KW"/>
</dbReference>
<dbReference type="CDD" id="cd02440">
    <property type="entry name" value="AdoMet_MTases"/>
    <property type="match status" value="1"/>
</dbReference>
<dbReference type="FunFam" id="3.40.50.150:FF:000965">
    <property type="entry name" value="Uncharacterized methyltransferase-like C25B8.10"/>
    <property type="match status" value="1"/>
</dbReference>
<dbReference type="Gene3D" id="3.40.50.150">
    <property type="entry name" value="Vaccinia Virus protein VP39"/>
    <property type="match status" value="1"/>
</dbReference>
<dbReference type="InterPro" id="IPR051052">
    <property type="entry name" value="Diverse_substrate_MTase"/>
</dbReference>
<dbReference type="InterPro" id="IPR013216">
    <property type="entry name" value="Methyltransf_11"/>
</dbReference>
<dbReference type="InterPro" id="IPR029063">
    <property type="entry name" value="SAM-dependent_MTases_sf"/>
</dbReference>
<dbReference type="PANTHER" id="PTHR44942">
    <property type="entry name" value="METHYLTRANSF_11 DOMAIN-CONTAINING PROTEIN"/>
    <property type="match status" value="1"/>
</dbReference>
<dbReference type="PANTHER" id="PTHR44942:SF4">
    <property type="entry name" value="METHYLTRANSFERASE TYPE 11 DOMAIN-CONTAINING PROTEIN"/>
    <property type="match status" value="1"/>
</dbReference>
<dbReference type="Pfam" id="PF08241">
    <property type="entry name" value="Methyltransf_11"/>
    <property type="match status" value="1"/>
</dbReference>
<dbReference type="SUPFAM" id="SSF53335">
    <property type="entry name" value="S-adenosyl-L-methionine-dependent methyltransferases"/>
    <property type="match status" value="1"/>
</dbReference>
<keyword id="KW-0963">Cytoplasm</keyword>
<keyword id="KW-0489">Methyltransferase</keyword>
<keyword id="KW-0539">Nucleus</keyword>
<keyword id="KW-1185">Reference proteome</keyword>
<keyword id="KW-0808">Transferase</keyword>
<accession>Q9UTA8</accession>